<evidence type="ECO:0000255" key="1">
    <source>
        <dbReference type="HAMAP-Rule" id="MF_00298"/>
    </source>
</evidence>
<organism>
    <name type="scientific">Shigella dysenteriae serotype 1 (strain Sd197)</name>
    <dbReference type="NCBI Taxonomy" id="300267"/>
    <lineage>
        <taxon>Bacteria</taxon>
        <taxon>Pseudomonadati</taxon>
        <taxon>Pseudomonadota</taxon>
        <taxon>Gammaproteobacteria</taxon>
        <taxon>Enterobacterales</taxon>
        <taxon>Enterobacteriaceae</taxon>
        <taxon>Shigella</taxon>
    </lineage>
</organism>
<gene>
    <name evidence="1" type="primary">rppH</name>
    <name evidence="1" type="synonym">nudH</name>
    <name type="ordered locus">SDY_3047</name>
</gene>
<protein>
    <recommendedName>
        <fullName evidence="1">RNA pyrophosphohydrolase</fullName>
        <ecNumber evidence="1">3.6.1.-</ecNumber>
    </recommendedName>
    <alternativeName>
        <fullName evidence="1">(Di)nucleoside polyphosphate hydrolase</fullName>
    </alternativeName>
</protein>
<comment type="function">
    <text evidence="1">Accelerates the degradation of transcripts by removing pyrophosphate from the 5'-end of triphosphorylated RNA, leading to a more labile monophosphorylated state that can stimulate subsequent ribonuclease cleavage.</text>
</comment>
<comment type="cofactor">
    <cofactor evidence="1">
        <name>a divalent metal cation</name>
        <dbReference type="ChEBI" id="CHEBI:60240"/>
    </cofactor>
</comment>
<comment type="similarity">
    <text evidence="1">Belongs to the Nudix hydrolase family. RppH subfamily.</text>
</comment>
<feature type="chain" id="PRO_0000231937" description="RNA pyrophosphohydrolase">
    <location>
        <begin position="1"/>
        <end position="176"/>
    </location>
</feature>
<feature type="domain" description="Nudix hydrolase" evidence="1">
    <location>
        <begin position="6"/>
        <end position="149"/>
    </location>
</feature>
<feature type="short sequence motif" description="Nudix box">
    <location>
        <begin position="38"/>
        <end position="59"/>
    </location>
</feature>
<dbReference type="EC" id="3.6.1.-" evidence="1"/>
<dbReference type="EMBL" id="CP000034">
    <property type="protein sequence ID" value="ABB63064.1"/>
    <property type="molecule type" value="Genomic_DNA"/>
</dbReference>
<dbReference type="RefSeq" id="WP_000564489.1">
    <property type="nucleotide sequence ID" value="NC_007606.1"/>
</dbReference>
<dbReference type="RefSeq" id="YP_404555.1">
    <property type="nucleotide sequence ID" value="NC_007606.1"/>
</dbReference>
<dbReference type="SMR" id="Q32C91"/>
<dbReference type="STRING" id="300267.SDY_3047"/>
<dbReference type="EnsemblBacteria" id="ABB63064">
    <property type="protein sequence ID" value="ABB63064"/>
    <property type="gene ID" value="SDY_3047"/>
</dbReference>
<dbReference type="GeneID" id="75203778"/>
<dbReference type="KEGG" id="sdy:SDY_3047"/>
<dbReference type="PATRIC" id="fig|300267.13.peg.3652"/>
<dbReference type="HOGENOM" id="CLU_087195_3_2_6"/>
<dbReference type="Proteomes" id="UP000002716">
    <property type="component" value="Chromosome"/>
</dbReference>
<dbReference type="GO" id="GO:0005737">
    <property type="term" value="C:cytoplasm"/>
    <property type="evidence" value="ECO:0007669"/>
    <property type="project" value="TreeGrafter"/>
</dbReference>
<dbReference type="GO" id="GO:0034353">
    <property type="term" value="F:mRNA 5'-diphosphatase activity"/>
    <property type="evidence" value="ECO:0007669"/>
    <property type="project" value="TreeGrafter"/>
</dbReference>
<dbReference type="GO" id="GO:0006402">
    <property type="term" value="P:mRNA catabolic process"/>
    <property type="evidence" value="ECO:0007669"/>
    <property type="project" value="TreeGrafter"/>
</dbReference>
<dbReference type="CDD" id="cd03671">
    <property type="entry name" value="NUDIX_Ap4A_hydrolase_plant_like"/>
    <property type="match status" value="1"/>
</dbReference>
<dbReference type="FunFam" id="3.90.79.10:FF:000001">
    <property type="entry name" value="RNA pyrophosphohydrolase"/>
    <property type="match status" value="1"/>
</dbReference>
<dbReference type="Gene3D" id="3.90.79.10">
    <property type="entry name" value="Nucleoside Triphosphate Pyrophosphohydrolase"/>
    <property type="match status" value="1"/>
</dbReference>
<dbReference type="HAMAP" id="MF_00298">
    <property type="entry name" value="Nudix_RppH"/>
    <property type="match status" value="1"/>
</dbReference>
<dbReference type="InterPro" id="IPR020476">
    <property type="entry name" value="Nudix_hydrolase"/>
</dbReference>
<dbReference type="InterPro" id="IPR015797">
    <property type="entry name" value="NUDIX_hydrolase-like_dom_sf"/>
</dbReference>
<dbReference type="InterPro" id="IPR020084">
    <property type="entry name" value="NUDIX_hydrolase_CS"/>
</dbReference>
<dbReference type="InterPro" id="IPR000086">
    <property type="entry name" value="NUDIX_hydrolase_dom"/>
</dbReference>
<dbReference type="InterPro" id="IPR022927">
    <property type="entry name" value="RppH"/>
</dbReference>
<dbReference type="NCBIfam" id="NF001934">
    <property type="entry name" value="PRK00714.1-1"/>
    <property type="match status" value="1"/>
</dbReference>
<dbReference type="NCBIfam" id="NF001937">
    <property type="entry name" value="PRK00714.1-4"/>
    <property type="match status" value="1"/>
</dbReference>
<dbReference type="NCBIfam" id="NF001938">
    <property type="entry name" value="PRK00714.1-5"/>
    <property type="match status" value="1"/>
</dbReference>
<dbReference type="PANTHER" id="PTHR23114">
    <property type="entry name" value="M7GPPPN-MRNA HYDROLASE"/>
    <property type="match status" value="1"/>
</dbReference>
<dbReference type="PANTHER" id="PTHR23114:SF17">
    <property type="entry name" value="M7GPPPN-MRNA HYDROLASE"/>
    <property type="match status" value="1"/>
</dbReference>
<dbReference type="Pfam" id="PF00293">
    <property type="entry name" value="NUDIX"/>
    <property type="match status" value="1"/>
</dbReference>
<dbReference type="PRINTS" id="PR00502">
    <property type="entry name" value="NUDIXFAMILY"/>
</dbReference>
<dbReference type="SUPFAM" id="SSF55811">
    <property type="entry name" value="Nudix"/>
    <property type="match status" value="1"/>
</dbReference>
<dbReference type="PROSITE" id="PS51462">
    <property type="entry name" value="NUDIX"/>
    <property type="match status" value="1"/>
</dbReference>
<dbReference type="PROSITE" id="PS00893">
    <property type="entry name" value="NUDIX_BOX"/>
    <property type="match status" value="1"/>
</dbReference>
<reference key="1">
    <citation type="journal article" date="2005" name="Nucleic Acids Res.">
        <title>Genome dynamics and diversity of Shigella species, the etiologic agents of bacillary dysentery.</title>
        <authorList>
            <person name="Yang F."/>
            <person name="Yang J."/>
            <person name="Zhang X."/>
            <person name="Chen L."/>
            <person name="Jiang Y."/>
            <person name="Yan Y."/>
            <person name="Tang X."/>
            <person name="Wang J."/>
            <person name="Xiong Z."/>
            <person name="Dong J."/>
            <person name="Xue Y."/>
            <person name="Zhu Y."/>
            <person name="Xu X."/>
            <person name="Sun L."/>
            <person name="Chen S."/>
            <person name="Nie H."/>
            <person name="Peng J."/>
            <person name="Xu J."/>
            <person name="Wang Y."/>
            <person name="Yuan Z."/>
            <person name="Wen Y."/>
            <person name="Yao Z."/>
            <person name="Shen Y."/>
            <person name="Qiang B."/>
            <person name="Hou Y."/>
            <person name="Yu J."/>
            <person name="Jin Q."/>
        </authorList>
    </citation>
    <scope>NUCLEOTIDE SEQUENCE [LARGE SCALE GENOMIC DNA]</scope>
    <source>
        <strain>Sd197</strain>
    </source>
</reference>
<sequence>MIDDDGYRPNVGIVICNRQGQVMWARRFGQHSWQFPQGGINPGESAEQAMYRELFEEVGLSRKDVRILASTRNWLRYKLPKRLVRWDTKPVCIGQKQKWFLLQLVSGDAEINMQTSSTPEFDGWRWVSYWYPVRQVVSFKRDVYRRVMKEFASVVMSLQENTPKPQNASAYRRKRG</sequence>
<proteinExistence type="inferred from homology"/>
<accession>Q32C91</accession>
<name>RPPH_SHIDS</name>
<keyword id="KW-0378">Hydrolase</keyword>
<keyword id="KW-1185">Reference proteome</keyword>